<keyword id="KW-0028">Amino-acid biosynthesis</keyword>
<keyword id="KW-0963">Cytoplasm</keyword>
<keyword id="KW-0521">NADP</keyword>
<keyword id="KW-0560">Oxidoreductase</keyword>
<keyword id="KW-0641">Proline biosynthesis</keyword>
<gene>
    <name evidence="1" type="primary">proA</name>
    <name type="ordered locus">Mmcs_3538</name>
</gene>
<reference key="1">
    <citation type="submission" date="2006-06" db="EMBL/GenBank/DDBJ databases">
        <title>Complete sequence of chromosome of Mycobacterium sp. MCS.</title>
        <authorList>
            <consortium name="US DOE Joint Genome Institute"/>
            <person name="Copeland A."/>
            <person name="Lucas S."/>
            <person name="Lapidus A."/>
            <person name="Barry K."/>
            <person name="Detter J.C."/>
            <person name="Glavina del Rio T."/>
            <person name="Hammon N."/>
            <person name="Israni S."/>
            <person name="Dalin E."/>
            <person name="Tice H."/>
            <person name="Pitluck S."/>
            <person name="Martinez M."/>
            <person name="Schmutz J."/>
            <person name="Larimer F."/>
            <person name="Land M."/>
            <person name="Hauser L."/>
            <person name="Kyrpides N."/>
            <person name="Kim E."/>
            <person name="Miller C.D."/>
            <person name="Hughes J.E."/>
            <person name="Anderson A.J."/>
            <person name="Sims R.C."/>
            <person name="Richardson P."/>
        </authorList>
    </citation>
    <scope>NUCLEOTIDE SEQUENCE [LARGE SCALE GENOMIC DNA]</scope>
    <source>
        <strain>MCS</strain>
    </source>
</reference>
<evidence type="ECO:0000255" key="1">
    <source>
        <dbReference type="HAMAP-Rule" id="MF_00412"/>
    </source>
</evidence>
<organism>
    <name type="scientific">Mycobacterium sp. (strain MCS)</name>
    <dbReference type="NCBI Taxonomy" id="164756"/>
    <lineage>
        <taxon>Bacteria</taxon>
        <taxon>Bacillati</taxon>
        <taxon>Actinomycetota</taxon>
        <taxon>Actinomycetes</taxon>
        <taxon>Mycobacteriales</taxon>
        <taxon>Mycobacteriaceae</taxon>
        <taxon>Mycobacterium</taxon>
    </lineage>
</organism>
<sequence length="415" mass="43482">MSVHAPAAPDLRTEVHDAARRARVASRTLATLSTETKNRALRAAADRVLMDAHLIIAGNERDLEKARAAGTPDAMLDRLALNPQRIDGVAAGLRQVASLPDPVGEVLRGNTLVNGLQLRQQRVPLGVVGIVYEGRPNVTVDAFGLTLKSGNAVLLRGSSSAAHSNAALVDSLRAALVAEGLDANAVQLLPSHDRASVTHLIQARGLVDVVIPRGGAGLIDAVVRDAQVPTIETGVGNCHVYVHSAADLDMAETILLNAKTRRPSVCNAAESVLIDAAIAEEAVPRLTKALQDAGVTVHADPTEEELRAEFLSMDIALAVVDGVDAAIAHVNEYGSGHTEAIVTADLAAAQRFTERVDAAAVMVNASTAFTDGEQFGFGAEIGISTQKLHARGPMGLPELTSTKWIVWGDGHTRPA</sequence>
<comment type="function">
    <text evidence="1">Catalyzes the NADPH-dependent reduction of L-glutamate 5-phosphate into L-glutamate 5-semialdehyde and phosphate. The product spontaneously undergoes cyclization to form 1-pyrroline-5-carboxylate.</text>
</comment>
<comment type="catalytic activity">
    <reaction evidence="1">
        <text>L-glutamate 5-semialdehyde + phosphate + NADP(+) = L-glutamyl 5-phosphate + NADPH + H(+)</text>
        <dbReference type="Rhea" id="RHEA:19541"/>
        <dbReference type="ChEBI" id="CHEBI:15378"/>
        <dbReference type="ChEBI" id="CHEBI:43474"/>
        <dbReference type="ChEBI" id="CHEBI:57783"/>
        <dbReference type="ChEBI" id="CHEBI:58066"/>
        <dbReference type="ChEBI" id="CHEBI:58274"/>
        <dbReference type="ChEBI" id="CHEBI:58349"/>
        <dbReference type="EC" id="1.2.1.41"/>
    </reaction>
</comment>
<comment type="pathway">
    <text evidence="1">Amino-acid biosynthesis; L-proline biosynthesis; L-glutamate 5-semialdehyde from L-glutamate: step 2/2.</text>
</comment>
<comment type="subcellular location">
    <subcellularLocation>
        <location evidence="1">Cytoplasm</location>
    </subcellularLocation>
</comment>
<comment type="similarity">
    <text evidence="1">Belongs to the gamma-glutamyl phosphate reductase family.</text>
</comment>
<feature type="chain" id="PRO_1000049967" description="Gamma-glutamyl phosphate reductase">
    <location>
        <begin position="1"/>
        <end position="415"/>
    </location>
</feature>
<proteinExistence type="inferred from homology"/>
<name>PROA_MYCSS</name>
<protein>
    <recommendedName>
        <fullName evidence="1">Gamma-glutamyl phosphate reductase</fullName>
        <shortName evidence="1">GPR</shortName>
        <ecNumber evidence="1">1.2.1.41</ecNumber>
    </recommendedName>
    <alternativeName>
        <fullName evidence="1">Glutamate-5-semialdehyde dehydrogenase</fullName>
    </alternativeName>
    <alternativeName>
        <fullName evidence="1">Glutamyl-gamma-semialdehyde dehydrogenase</fullName>
        <shortName evidence="1">GSA dehydrogenase</shortName>
    </alternativeName>
</protein>
<dbReference type="EC" id="1.2.1.41" evidence="1"/>
<dbReference type="EMBL" id="CP000384">
    <property type="protein sequence ID" value="ABG09645.1"/>
    <property type="molecule type" value="Genomic_DNA"/>
</dbReference>
<dbReference type="SMR" id="Q1B639"/>
<dbReference type="KEGG" id="mmc:Mmcs_3538"/>
<dbReference type="HOGENOM" id="CLU_030231_0_0_11"/>
<dbReference type="BioCyc" id="MSP164756:G1G6O-3609-MONOMER"/>
<dbReference type="UniPathway" id="UPA00098">
    <property type="reaction ID" value="UER00360"/>
</dbReference>
<dbReference type="GO" id="GO:0005737">
    <property type="term" value="C:cytoplasm"/>
    <property type="evidence" value="ECO:0007669"/>
    <property type="project" value="UniProtKB-SubCell"/>
</dbReference>
<dbReference type="GO" id="GO:0004350">
    <property type="term" value="F:glutamate-5-semialdehyde dehydrogenase activity"/>
    <property type="evidence" value="ECO:0007669"/>
    <property type="project" value="UniProtKB-UniRule"/>
</dbReference>
<dbReference type="GO" id="GO:0050661">
    <property type="term" value="F:NADP binding"/>
    <property type="evidence" value="ECO:0007669"/>
    <property type="project" value="InterPro"/>
</dbReference>
<dbReference type="GO" id="GO:0055129">
    <property type="term" value="P:L-proline biosynthetic process"/>
    <property type="evidence" value="ECO:0007669"/>
    <property type="project" value="UniProtKB-UniRule"/>
</dbReference>
<dbReference type="CDD" id="cd07079">
    <property type="entry name" value="ALDH_F18-19_ProA-GPR"/>
    <property type="match status" value="1"/>
</dbReference>
<dbReference type="Gene3D" id="3.40.605.10">
    <property type="entry name" value="Aldehyde Dehydrogenase, Chain A, domain 1"/>
    <property type="match status" value="1"/>
</dbReference>
<dbReference type="Gene3D" id="3.40.309.10">
    <property type="entry name" value="Aldehyde Dehydrogenase, Chain A, domain 2"/>
    <property type="match status" value="1"/>
</dbReference>
<dbReference type="HAMAP" id="MF_00412">
    <property type="entry name" value="ProA"/>
    <property type="match status" value="1"/>
</dbReference>
<dbReference type="InterPro" id="IPR016161">
    <property type="entry name" value="Ald_DH/histidinol_DH"/>
</dbReference>
<dbReference type="InterPro" id="IPR016163">
    <property type="entry name" value="Ald_DH_C"/>
</dbReference>
<dbReference type="InterPro" id="IPR016162">
    <property type="entry name" value="Ald_DH_N"/>
</dbReference>
<dbReference type="InterPro" id="IPR015590">
    <property type="entry name" value="Aldehyde_DH_dom"/>
</dbReference>
<dbReference type="InterPro" id="IPR012134">
    <property type="entry name" value="Glu-5-SA_DH"/>
</dbReference>
<dbReference type="InterPro" id="IPR000965">
    <property type="entry name" value="GPR_dom"/>
</dbReference>
<dbReference type="NCBIfam" id="NF001221">
    <property type="entry name" value="PRK00197.1"/>
    <property type="match status" value="1"/>
</dbReference>
<dbReference type="NCBIfam" id="TIGR00407">
    <property type="entry name" value="proA"/>
    <property type="match status" value="1"/>
</dbReference>
<dbReference type="PANTHER" id="PTHR11063:SF8">
    <property type="entry name" value="DELTA-1-PYRROLINE-5-CARBOXYLATE SYNTHASE"/>
    <property type="match status" value="1"/>
</dbReference>
<dbReference type="PANTHER" id="PTHR11063">
    <property type="entry name" value="GLUTAMATE SEMIALDEHYDE DEHYDROGENASE"/>
    <property type="match status" value="1"/>
</dbReference>
<dbReference type="Pfam" id="PF00171">
    <property type="entry name" value="Aldedh"/>
    <property type="match status" value="2"/>
</dbReference>
<dbReference type="PIRSF" id="PIRSF000151">
    <property type="entry name" value="GPR"/>
    <property type="match status" value="1"/>
</dbReference>
<dbReference type="SUPFAM" id="SSF53720">
    <property type="entry name" value="ALDH-like"/>
    <property type="match status" value="1"/>
</dbReference>
<accession>Q1B639</accession>